<name>CBPA1_RAT</name>
<feature type="signal peptide">
    <location>
        <begin position="1"/>
        <end position="16"/>
    </location>
</feature>
<feature type="propeptide" id="PRO_0000004351" description="Activation peptide">
    <location>
        <begin position="17"/>
        <end position="110"/>
    </location>
</feature>
<feature type="chain" id="PRO_0000004352" description="Carboxypeptidase A1">
    <location>
        <begin position="111"/>
        <end position="419"/>
    </location>
</feature>
<feature type="domain" description="Peptidase M14" evidence="5">
    <location>
        <begin position="121"/>
        <end position="414"/>
    </location>
</feature>
<feature type="active site" description="Proton donor/acceptor" evidence="5">
    <location>
        <position position="380"/>
    </location>
</feature>
<feature type="binding site" evidence="1">
    <location>
        <begin position="179"/>
        <end position="182"/>
    </location>
    <ligand>
        <name>substrate</name>
    </ligand>
</feature>
<feature type="binding site" evidence="5">
    <location>
        <position position="179"/>
    </location>
    <ligand>
        <name>Zn(2+)</name>
        <dbReference type="ChEBI" id="CHEBI:29105"/>
        <note>catalytic</note>
    </ligand>
</feature>
<feature type="binding site" evidence="5">
    <location>
        <position position="182"/>
    </location>
    <ligand>
        <name>Zn(2+)</name>
        <dbReference type="ChEBI" id="CHEBI:29105"/>
        <note>catalytic</note>
    </ligand>
</feature>
<feature type="binding site" evidence="1">
    <location>
        <position position="237"/>
    </location>
    <ligand>
        <name>substrate</name>
    </ligand>
</feature>
<feature type="binding site" evidence="1">
    <location>
        <begin position="254"/>
        <end position="255"/>
    </location>
    <ligand>
        <name>substrate</name>
    </ligand>
</feature>
<feature type="binding site" evidence="5">
    <location>
        <position position="306"/>
    </location>
    <ligand>
        <name>Zn(2+)</name>
        <dbReference type="ChEBI" id="CHEBI:29105"/>
        <note>catalytic</note>
    </ligand>
</feature>
<feature type="binding site" evidence="1">
    <location>
        <begin position="307"/>
        <end position="308"/>
    </location>
    <ligand>
        <name>substrate</name>
    </ligand>
</feature>
<feature type="binding site" evidence="1">
    <location>
        <position position="358"/>
    </location>
    <ligand>
        <name>substrate</name>
    </ligand>
</feature>
<feature type="disulfide bond" evidence="3">
    <location>
        <begin position="248"/>
        <end position="271"/>
    </location>
</feature>
<feature type="sequence conflict" description="In Ref. 1; CAA24542/AAA40893." evidence="6" ref="1">
    <original>I</original>
    <variation>V</variation>
    <location>
        <position position="196"/>
    </location>
</feature>
<feature type="sequence conflict" description="In Ref. 1; CAA24542/AAA40893." evidence="6" ref="1">
    <original>FGM</original>
    <variation>LGK</variation>
    <location>
        <begin position="261"/>
        <end position="263"/>
    </location>
</feature>
<feature type="sequence conflict" description="In Ref. 1; CAA24542/AAA40893." evidence="6" ref="1">
    <original>K</original>
    <variation>E</variation>
    <location>
        <position position="347"/>
    </location>
</feature>
<proteinExistence type="evidence at transcript level"/>
<evidence type="ECO:0000250" key="1">
    <source>
        <dbReference type="UniProtKB" id="P00730"/>
    </source>
</evidence>
<evidence type="ECO:0000250" key="2">
    <source>
        <dbReference type="UniProtKB" id="P15085"/>
    </source>
</evidence>
<evidence type="ECO:0000250" key="3">
    <source>
        <dbReference type="UniProtKB" id="Q96IY4"/>
    </source>
</evidence>
<evidence type="ECO:0000250" key="4">
    <source>
        <dbReference type="UniProtKB" id="Q9UI42"/>
    </source>
</evidence>
<evidence type="ECO:0000255" key="5">
    <source>
        <dbReference type="PROSITE-ProRule" id="PRU01379"/>
    </source>
</evidence>
<evidence type="ECO:0000305" key="6"/>
<evidence type="ECO:0000312" key="7">
    <source>
        <dbReference type="RGD" id="2388"/>
    </source>
</evidence>
<sequence length="419" mass="47197">MKRLLILSLLLEAVCGNENFVGHQVLRISAADEAQVQKVKELEDLEHLQLDFWRDAARAGIPIDVRVPFPSIQSVKAFLEYHGISYEIMIEDVQLLLDEEKQQMSAFQARALSTDSFNYATYHTLDEIYEFMDLLVAEHPQLVSKIQIGNTFEGRPIHVLKFSTGGTNRPAIWIDTGIHSREWVTQASGVWFAKKITKDYGQDPTFTAVLDNMDIFLEIVTNPDGFAYTHKTNRMWRKTRSHTQGSLCVGVDPNRNWDAGFGMAGASSNPCSETYRGKFPNSEVEVKSIVDFVTSHGNIKAFISIHSYSQLLLYPYGYTSEPAPDQAELDQLAKSAVTALTSLHGTKFKYGSIIDTIYQASGSTIDWTYSQGIKYSFTFELRDTGLRGFLLPASQIIPTAEETWLALLTIMDHTVKHPY</sequence>
<organism>
    <name type="scientific">Rattus norvegicus</name>
    <name type="common">Rat</name>
    <dbReference type="NCBI Taxonomy" id="10116"/>
    <lineage>
        <taxon>Eukaryota</taxon>
        <taxon>Metazoa</taxon>
        <taxon>Chordata</taxon>
        <taxon>Craniata</taxon>
        <taxon>Vertebrata</taxon>
        <taxon>Euteleostomi</taxon>
        <taxon>Mammalia</taxon>
        <taxon>Eutheria</taxon>
        <taxon>Euarchontoglires</taxon>
        <taxon>Glires</taxon>
        <taxon>Rodentia</taxon>
        <taxon>Myomorpha</taxon>
        <taxon>Muroidea</taxon>
        <taxon>Muridae</taxon>
        <taxon>Murinae</taxon>
        <taxon>Rattus</taxon>
    </lineage>
</organism>
<protein>
    <recommendedName>
        <fullName evidence="6">Carboxypeptidase A1</fullName>
        <ecNumber evidence="2">3.4.17.1</ecNumber>
    </recommendedName>
</protein>
<accession>P00731</accession>
<dbReference type="EC" id="3.4.17.1" evidence="2"/>
<dbReference type="EMBL" id="V01232">
    <property type="protein sequence ID" value="CAA24542.1"/>
    <property type="molecule type" value="mRNA"/>
</dbReference>
<dbReference type="EMBL" id="J00713">
    <property type="protein sequence ID" value="AAA40893.1"/>
    <property type="molecule type" value="mRNA"/>
</dbReference>
<dbReference type="EMBL" id="M23990">
    <property type="protein sequence ID" value="AAA40955.1"/>
    <property type="molecule type" value="Genomic_DNA"/>
</dbReference>
<dbReference type="EMBL" id="M23960">
    <property type="protein sequence ID" value="AAA40955.1"/>
    <property type="status" value="JOINED"/>
    <property type="molecule type" value="Genomic_DNA"/>
</dbReference>
<dbReference type="EMBL" id="M23985">
    <property type="protein sequence ID" value="AAA40955.1"/>
    <property type="status" value="JOINED"/>
    <property type="molecule type" value="Genomic_DNA"/>
</dbReference>
<dbReference type="EMBL" id="M23986">
    <property type="protein sequence ID" value="AAA40955.1"/>
    <property type="status" value="JOINED"/>
    <property type="molecule type" value="Genomic_DNA"/>
</dbReference>
<dbReference type="EMBL" id="M23987">
    <property type="protein sequence ID" value="AAA40955.1"/>
    <property type="status" value="JOINED"/>
    <property type="molecule type" value="Genomic_DNA"/>
</dbReference>
<dbReference type="EMBL" id="M23988">
    <property type="protein sequence ID" value="AAA40955.1"/>
    <property type="status" value="JOINED"/>
    <property type="molecule type" value="Genomic_DNA"/>
</dbReference>
<dbReference type="EMBL" id="M23989">
    <property type="protein sequence ID" value="AAA40955.1"/>
    <property type="status" value="JOINED"/>
    <property type="molecule type" value="Genomic_DNA"/>
</dbReference>
<dbReference type="PIR" id="A00911">
    <property type="entry name" value="CPRTA"/>
</dbReference>
<dbReference type="RefSeq" id="NP_058694.2">
    <property type="nucleotide sequence ID" value="NM_016998.3"/>
</dbReference>
<dbReference type="SMR" id="P00731"/>
<dbReference type="FunCoup" id="P00731">
    <property type="interactions" value="102"/>
</dbReference>
<dbReference type="STRING" id="10116.ENSRNOP00000014465"/>
<dbReference type="MEROPS" id="M14.001"/>
<dbReference type="PhosphoSitePlus" id="P00731"/>
<dbReference type="PaxDb" id="10116-ENSRNOP00000014465"/>
<dbReference type="Ensembl" id="ENSRNOT00000014465.4">
    <property type="protein sequence ID" value="ENSRNOP00000014465.1"/>
    <property type="gene ID" value="ENSRNOG00000010725.4"/>
</dbReference>
<dbReference type="GeneID" id="24269"/>
<dbReference type="KEGG" id="rno:24269"/>
<dbReference type="UCSC" id="RGD:2388">
    <property type="organism name" value="rat"/>
</dbReference>
<dbReference type="AGR" id="RGD:2388"/>
<dbReference type="CTD" id="1357"/>
<dbReference type="RGD" id="2388">
    <property type="gene designation" value="Cpa1"/>
</dbReference>
<dbReference type="eggNOG" id="KOG2650">
    <property type="taxonomic scope" value="Eukaryota"/>
</dbReference>
<dbReference type="GeneTree" id="ENSGT00940000158082"/>
<dbReference type="HOGENOM" id="CLU_019326_0_0_1"/>
<dbReference type="InParanoid" id="P00731"/>
<dbReference type="OMA" id="LGYTIMI"/>
<dbReference type="OrthoDB" id="3626597at2759"/>
<dbReference type="PhylomeDB" id="P00731"/>
<dbReference type="TreeFam" id="TF317197"/>
<dbReference type="BRENDA" id="3.4.17.1">
    <property type="organism ID" value="5301"/>
</dbReference>
<dbReference type="SABIO-RK" id="P00731"/>
<dbReference type="PRO" id="PR:P00731"/>
<dbReference type="Proteomes" id="UP000002494">
    <property type="component" value="Chromosome 4"/>
</dbReference>
<dbReference type="Bgee" id="ENSRNOG00000010725">
    <property type="expression patterns" value="Expressed in pancreas and 14 other cell types or tissues"/>
</dbReference>
<dbReference type="GO" id="GO:0005615">
    <property type="term" value="C:extracellular space"/>
    <property type="evidence" value="ECO:0000266"/>
    <property type="project" value="RGD"/>
</dbReference>
<dbReference type="GO" id="GO:0008238">
    <property type="term" value="F:exopeptidase activity"/>
    <property type="evidence" value="ECO:0000314"/>
    <property type="project" value="RGD"/>
</dbReference>
<dbReference type="GO" id="GO:0004181">
    <property type="term" value="F:metallocarboxypeptidase activity"/>
    <property type="evidence" value="ECO:0000250"/>
    <property type="project" value="UniProtKB"/>
</dbReference>
<dbReference type="GO" id="GO:0008270">
    <property type="term" value="F:zinc ion binding"/>
    <property type="evidence" value="ECO:0007669"/>
    <property type="project" value="InterPro"/>
</dbReference>
<dbReference type="GO" id="GO:0006691">
    <property type="term" value="P:leukotriene metabolic process"/>
    <property type="evidence" value="ECO:0000250"/>
    <property type="project" value="UniProtKB"/>
</dbReference>
<dbReference type="GO" id="GO:0006508">
    <property type="term" value="P:proteolysis"/>
    <property type="evidence" value="ECO:0000318"/>
    <property type="project" value="GO_Central"/>
</dbReference>
<dbReference type="GO" id="GO:0051603">
    <property type="term" value="P:proteolysis involved in protein catabolic process"/>
    <property type="evidence" value="ECO:0000314"/>
    <property type="project" value="RGD"/>
</dbReference>
<dbReference type="GO" id="GO:0046686">
    <property type="term" value="P:response to cadmium ion"/>
    <property type="evidence" value="ECO:0000314"/>
    <property type="project" value="RGD"/>
</dbReference>
<dbReference type="CDD" id="cd03870">
    <property type="entry name" value="M14_CPA"/>
    <property type="match status" value="1"/>
</dbReference>
<dbReference type="FunFam" id="3.40.630.10:FF:000132">
    <property type="entry name" value="Carboxypeptidase A1"/>
    <property type="match status" value="1"/>
</dbReference>
<dbReference type="FunFam" id="3.30.70.340:FF:000001">
    <property type="entry name" value="Carboxypeptidase A5"/>
    <property type="match status" value="1"/>
</dbReference>
<dbReference type="Gene3D" id="3.30.70.340">
    <property type="entry name" value="Metallocarboxypeptidase-like"/>
    <property type="match status" value="1"/>
</dbReference>
<dbReference type="Gene3D" id="3.40.630.10">
    <property type="entry name" value="Zn peptidases"/>
    <property type="match status" value="1"/>
</dbReference>
<dbReference type="InterPro" id="IPR034248">
    <property type="entry name" value="CPA_M14_CPD"/>
</dbReference>
<dbReference type="InterPro" id="IPR036990">
    <property type="entry name" value="M14A-like_propep"/>
</dbReference>
<dbReference type="InterPro" id="IPR003146">
    <property type="entry name" value="M14A_act_pep"/>
</dbReference>
<dbReference type="InterPro" id="IPR000834">
    <property type="entry name" value="Peptidase_M14"/>
</dbReference>
<dbReference type="PANTHER" id="PTHR11705:SF94">
    <property type="entry name" value="CARBOXYPEPTIDASE A1"/>
    <property type="match status" value="1"/>
</dbReference>
<dbReference type="PANTHER" id="PTHR11705">
    <property type="entry name" value="PROTEASE FAMILY M14 CARBOXYPEPTIDASE A,B"/>
    <property type="match status" value="1"/>
</dbReference>
<dbReference type="Pfam" id="PF00246">
    <property type="entry name" value="Peptidase_M14"/>
    <property type="match status" value="1"/>
</dbReference>
<dbReference type="Pfam" id="PF02244">
    <property type="entry name" value="Propep_M14"/>
    <property type="match status" value="1"/>
</dbReference>
<dbReference type="PRINTS" id="PR00765">
    <property type="entry name" value="CRBOXYPTASEA"/>
</dbReference>
<dbReference type="SMART" id="SM00631">
    <property type="entry name" value="Zn_pept"/>
    <property type="match status" value="1"/>
</dbReference>
<dbReference type="SUPFAM" id="SSF54897">
    <property type="entry name" value="Protease propeptides/inhibitors"/>
    <property type="match status" value="1"/>
</dbReference>
<dbReference type="SUPFAM" id="SSF53187">
    <property type="entry name" value="Zn-dependent exopeptidases"/>
    <property type="match status" value="1"/>
</dbReference>
<dbReference type="PROSITE" id="PS00132">
    <property type="entry name" value="CARBOXYPEPT_ZN_1"/>
    <property type="match status" value="1"/>
</dbReference>
<dbReference type="PROSITE" id="PS00133">
    <property type="entry name" value="CARBOXYPEPT_ZN_2"/>
    <property type="match status" value="1"/>
</dbReference>
<dbReference type="PROSITE" id="PS52035">
    <property type="entry name" value="PEPTIDASE_M14"/>
    <property type="match status" value="1"/>
</dbReference>
<gene>
    <name evidence="7" type="primary">Cpa1</name>
    <name type="synonym">Cpa</name>
</gene>
<comment type="function">
    <text evidence="1 2">Carboxypeptidase that catalyzes the release of a C-terminal amino acid, but has little or no action with -Asp, -Glu, -Arg, -Lys or -Pro (By similarity). Catalyzes the conversion of leukotriene C4 to leukotriene F4 via the hydrolysis of an amide bond (By similarity).</text>
</comment>
<comment type="catalytic activity">
    <reaction evidence="2">
        <text>Release of a C-terminal amino acid, but little or no action with -Asp, -Glu, -Arg, -Lys or -Pro.</text>
        <dbReference type="EC" id="3.4.17.1"/>
    </reaction>
</comment>
<comment type="catalytic activity">
    <reaction evidence="1">
        <text>leukotriene C4 + H2O = leukotriene F4 + glycine</text>
        <dbReference type="Rhea" id="RHEA:50740"/>
        <dbReference type="ChEBI" id="CHEBI:15377"/>
        <dbReference type="ChEBI" id="CHEBI:57305"/>
        <dbReference type="ChEBI" id="CHEBI:57973"/>
        <dbReference type="ChEBI" id="CHEBI:133618"/>
    </reaction>
    <physiologicalReaction direction="left-to-right" evidence="1">
        <dbReference type="Rhea" id="RHEA:50741"/>
    </physiologicalReaction>
</comment>
<comment type="cofactor">
    <cofactor evidence="2">
        <name>Zn(2+)</name>
        <dbReference type="ChEBI" id="CHEBI:29105"/>
    </cofactor>
    <text evidence="2">Binds 1 zinc ion per subunit.</text>
</comment>
<comment type="subunit">
    <text evidence="2">Monomer. May form a complex with proelastase 2.</text>
</comment>
<comment type="subcellular location">
    <subcellularLocation>
        <location evidence="4">Secreted</location>
    </subcellularLocation>
</comment>
<comment type="similarity">
    <text evidence="6">Belongs to the peptidase M14 family.</text>
</comment>
<keyword id="KW-0121">Carboxypeptidase</keyword>
<keyword id="KW-1015">Disulfide bond</keyword>
<keyword id="KW-0378">Hydrolase</keyword>
<keyword id="KW-0479">Metal-binding</keyword>
<keyword id="KW-0482">Metalloprotease</keyword>
<keyword id="KW-0645">Protease</keyword>
<keyword id="KW-1185">Reference proteome</keyword>
<keyword id="KW-0964">Secreted</keyword>
<keyword id="KW-0732">Signal</keyword>
<keyword id="KW-0862">Zinc</keyword>
<keyword id="KW-0865">Zymogen</keyword>
<reference key="1">
    <citation type="journal article" date="1982" name="Proc. Natl. Acad. Sci. U.S.A.">
        <title>Rat preprocarboxypeptidase A: cDNA sequence and preliminary characterization of the gene.</title>
        <authorList>
            <person name="Quinto C."/>
            <person name="Quiroga M."/>
            <person name="Swain W.F."/>
            <person name="Nikovits W.C. Jr."/>
            <person name="Standring D.N."/>
            <person name="Pictet R.L."/>
            <person name="Valenzuela P."/>
            <person name="Rutter W.J."/>
        </authorList>
    </citation>
    <scope>NUCLEOTIDE SEQUENCE [MRNA]</scope>
</reference>
<reference key="2">
    <citation type="journal article" date="1988" name="J. Biol. Chem.">
        <title>Structural characterization of the rat carboxypeptidase A1 and B genes. Comparative analysis of the rat carboxypeptidase gene family.</title>
        <authorList>
            <person name="Clauser E."/>
            <person name="Gardell S.J."/>
            <person name="Craik C.S."/>
            <person name="Macdonald R.J."/>
            <person name="Rutter W.J."/>
        </authorList>
    </citation>
    <scope>NUCLEOTIDE SEQUENCE [GENOMIC DNA]</scope>
</reference>